<feature type="chain" id="PRO_1000119696" description="Chaperone protein DnaK">
    <location>
        <begin position="1"/>
        <end position="648"/>
    </location>
</feature>
<feature type="modified residue" description="Phosphothreonine; by autocatalysis" evidence="1">
    <location>
        <position position="200"/>
    </location>
</feature>
<accession>A9BNG5</accession>
<dbReference type="EMBL" id="CP000884">
    <property type="protein sequence ID" value="ABX37860.1"/>
    <property type="molecule type" value="Genomic_DNA"/>
</dbReference>
<dbReference type="RefSeq" id="WP_012207030.1">
    <property type="nucleotide sequence ID" value="NC_010002.1"/>
</dbReference>
<dbReference type="SMR" id="A9BNG5"/>
<dbReference type="STRING" id="398578.Daci_5231"/>
<dbReference type="GeneID" id="24114017"/>
<dbReference type="KEGG" id="dac:Daci_5231"/>
<dbReference type="eggNOG" id="COG0443">
    <property type="taxonomic scope" value="Bacteria"/>
</dbReference>
<dbReference type="HOGENOM" id="CLU_005965_2_1_4"/>
<dbReference type="Proteomes" id="UP000000784">
    <property type="component" value="Chromosome"/>
</dbReference>
<dbReference type="GO" id="GO:0005524">
    <property type="term" value="F:ATP binding"/>
    <property type="evidence" value="ECO:0007669"/>
    <property type="project" value="UniProtKB-UniRule"/>
</dbReference>
<dbReference type="GO" id="GO:0140662">
    <property type="term" value="F:ATP-dependent protein folding chaperone"/>
    <property type="evidence" value="ECO:0007669"/>
    <property type="project" value="InterPro"/>
</dbReference>
<dbReference type="GO" id="GO:0051082">
    <property type="term" value="F:unfolded protein binding"/>
    <property type="evidence" value="ECO:0007669"/>
    <property type="project" value="InterPro"/>
</dbReference>
<dbReference type="CDD" id="cd10234">
    <property type="entry name" value="ASKHA_NBD_HSP70_DnaK-like"/>
    <property type="match status" value="1"/>
</dbReference>
<dbReference type="FunFam" id="2.60.34.10:FF:000014">
    <property type="entry name" value="Chaperone protein DnaK HSP70"/>
    <property type="match status" value="1"/>
</dbReference>
<dbReference type="FunFam" id="3.30.30.30:FF:000003">
    <property type="entry name" value="Heat shock protein 9"/>
    <property type="match status" value="1"/>
</dbReference>
<dbReference type="FunFam" id="1.20.1270.10:FF:000001">
    <property type="entry name" value="Molecular chaperone DnaK"/>
    <property type="match status" value="1"/>
</dbReference>
<dbReference type="FunFam" id="3.30.420.40:FF:000004">
    <property type="entry name" value="Molecular chaperone DnaK"/>
    <property type="match status" value="1"/>
</dbReference>
<dbReference type="FunFam" id="3.90.640.10:FF:000003">
    <property type="entry name" value="Molecular chaperone DnaK"/>
    <property type="match status" value="1"/>
</dbReference>
<dbReference type="Gene3D" id="1.20.1270.10">
    <property type="match status" value="1"/>
</dbReference>
<dbReference type="Gene3D" id="3.30.420.40">
    <property type="match status" value="2"/>
</dbReference>
<dbReference type="Gene3D" id="3.90.640.10">
    <property type="entry name" value="Actin, Chain A, domain 4"/>
    <property type="match status" value="1"/>
</dbReference>
<dbReference type="Gene3D" id="2.60.34.10">
    <property type="entry name" value="Substrate Binding Domain Of DNAk, Chain A, domain 1"/>
    <property type="match status" value="1"/>
</dbReference>
<dbReference type="HAMAP" id="MF_00332">
    <property type="entry name" value="DnaK"/>
    <property type="match status" value="1"/>
</dbReference>
<dbReference type="InterPro" id="IPR043129">
    <property type="entry name" value="ATPase_NBD"/>
</dbReference>
<dbReference type="InterPro" id="IPR012725">
    <property type="entry name" value="Chaperone_DnaK"/>
</dbReference>
<dbReference type="InterPro" id="IPR018181">
    <property type="entry name" value="Heat_shock_70_CS"/>
</dbReference>
<dbReference type="InterPro" id="IPR029048">
    <property type="entry name" value="HSP70_C_sf"/>
</dbReference>
<dbReference type="InterPro" id="IPR029047">
    <property type="entry name" value="HSP70_peptide-bd_sf"/>
</dbReference>
<dbReference type="InterPro" id="IPR013126">
    <property type="entry name" value="Hsp_70_fam"/>
</dbReference>
<dbReference type="NCBIfam" id="NF001413">
    <property type="entry name" value="PRK00290.1"/>
    <property type="match status" value="1"/>
</dbReference>
<dbReference type="NCBIfam" id="NF003520">
    <property type="entry name" value="PRK05183.1"/>
    <property type="match status" value="1"/>
</dbReference>
<dbReference type="NCBIfam" id="TIGR02350">
    <property type="entry name" value="prok_dnaK"/>
    <property type="match status" value="1"/>
</dbReference>
<dbReference type="PANTHER" id="PTHR19375">
    <property type="entry name" value="HEAT SHOCK PROTEIN 70KDA"/>
    <property type="match status" value="1"/>
</dbReference>
<dbReference type="Pfam" id="PF00012">
    <property type="entry name" value="HSP70"/>
    <property type="match status" value="1"/>
</dbReference>
<dbReference type="PRINTS" id="PR00301">
    <property type="entry name" value="HEATSHOCK70"/>
</dbReference>
<dbReference type="SUPFAM" id="SSF53067">
    <property type="entry name" value="Actin-like ATPase domain"/>
    <property type="match status" value="2"/>
</dbReference>
<dbReference type="SUPFAM" id="SSF100934">
    <property type="entry name" value="Heat shock protein 70kD (HSP70), C-terminal subdomain"/>
    <property type="match status" value="1"/>
</dbReference>
<dbReference type="SUPFAM" id="SSF100920">
    <property type="entry name" value="Heat shock protein 70kD (HSP70), peptide-binding domain"/>
    <property type="match status" value="1"/>
</dbReference>
<dbReference type="PROSITE" id="PS00297">
    <property type="entry name" value="HSP70_1"/>
    <property type="match status" value="1"/>
</dbReference>
<dbReference type="PROSITE" id="PS00329">
    <property type="entry name" value="HSP70_2"/>
    <property type="match status" value="1"/>
</dbReference>
<dbReference type="PROSITE" id="PS01036">
    <property type="entry name" value="HSP70_3"/>
    <property type="match status" value="1"/>
</dbReference>
<sequence length="648" mass="69129">MGKIIGIDLGTTNSCVAIMDGNTTRVIENSEGARTTPSIIAYQEDGEILVGASAKRQAVTNPRNTIYAAKRLIGRKFDEKEVQKDIDLMPYTISRADNGDAWVEVRGQKLAPPQISAEVLRKMKKTAEDYLGEPVTEAVITVPAYFNDAQRQATKDAGRIAGLEVKRIINEPTAAALAFGLDKTDKGDRKIAVYDLGGGTFDVSIIEIADVDGEKQFEVLSTNGDTFLGGEDFDQRIIDYIITEFKKEQGVDLAKDVLALQRLKEAAEKAKIELSNSAQTDINLPYITADASGPKHLNIKLTRSKLESLVEDLIERTIAPCRTAIKDAGVSVSDIDDVILVGGMTRMPKVQEKVKEFFGKDPRKDVNPDEAVAVGAAVQGQVLSGDRKDVLLLDVTPLSLGIETLGGVMTKMITKNTTIPTKFAQTFSTADDNQPAVTIKVFQGEREMASGNKMLGEFNLEGIPPAARGVPQIEVAFDIDANGILNVSAKDKASGKENKITIKANSGLSEDEIQKMVKDAELNAADDKKKLELVQARNQGEAAVHSVKKSLGEHGDKLDAGEKTAIESAVKDLEEALKGEDKDAIDAKTTALMTASQKLGEKMYADAQAAGGPEAAAAAAAGAAGASAGAAAADDNVVDAEVKEVKKD</sequence>
<reference key="1">
    <citation type="submission" date="2007-11" db="EMBL/GenBank/DDBJ databases">
        <title>Complete sequence of Delftia acidovorans DSM 14801 / SPH-1.</title>
        <authorList>
            <person name="Copeland A."/>
            <person name="Lucas S."/>
            <person name="Lapidus A."/>
            <person name="Barry K."/>
            <person name="Glavina del Rio T."/>
            <person name="Dalin E."/>
            <person name="Tice H."/>
            <person name="Pitluck S."/>
            <person name="Lowry S."/>
            <person name="Clum A."/>
            <person name="Schmutz J."/>
            <person name="Larimer F."/>
            <person name="Land M."/>
            <person name="Hauser L."/>
            <person name="Kyrpides N."/>
            <person name="Kim E."/>
            <person name="Schleheck D."/>
            <person name="Richardson P."/>
        </authorList>
    </citation>
    <scope>NUCLEOTIDE SEQUENCE [LARGE SCALE GENOMIC DNA]</scope>
    <source>
        <strain>DSM 14801 / SPH-1</strain>
    </source>
</reference>
<evidence type="ECO:0000255" key="1">
    <source>
        <dbReference type="HAMAP-Rule" id="MF_00332"/>
    </source>
</evidence>
<name>DNAK_DELAS</name>
<gene>
    <name evidence="1" type="primary">dnaK</name>
    <name type="ordered locus">Daci_5231</name>
</gene>
<proteinExistence type="inferred from homology"/>
<organism>
    <name type="scientific">Delftia acidovorans (strain DSM 14801 / SPH-1)</name>
    <dbReference type="NCBI Taxonomy" id="398578"/>
    <lineage>
        <taxon>Bacteria</taxon>
        <taxon>Pseudomonadati</taxon>
        <taxon>Pseudomonadota</taxon>
        <taxon>Betaproteobacteria</taxon>
        <taxon>Burkholderiales</taxon>
        <taxon>Comamonadaceae</taxon>
        <taxon>Delftia</taxon>
    </lineage>
</organism>
<comment type="function">
    <text evidence="1">Acts as a chaperone.</text>
</comment>
<comment type="induction">
    <text evidence="1">By stress conditions e.g. heat shock.</text>
</comment>
<comment type="similarity">
    <text evidence="1">Belongs to the heat shock protein 70 family.</text>
</comment>
<keyword id="KW-0067">ATP-binding</keyword>
<keyword id="KW-0143">Chaperone</keyword>
<keyword id="KW-0547">Nucleotide-binding</keyword>
<keyword id="KW-0597">Phosphoprotein</keyword>
<keyword id="KW-1185">Reference proteome</keyword>
<keyword id="KW-0346">Stress response</keyword>
<protein>
    <recommendedName>
        <fullName evidence="1">Chaperone protein DnaK</fullName>
    </recommendedName>
    <alternativeName>
        <fullName evidence="1">HSP70</fullName>
    </alternativeName>
    <alternativeName>
        <fullName evidence="1">Heat shock 70 kDa protein</fullName>
    </alternativeName>
    <alternativeName>
        <fullName evidence="1">Heat shock protein 70</fullName>
    </alternativeName>
</protein>